<gene>
    <name evidence="4" type="primary">BHLH156</name>
    <name evidence="6" type="ordered locus">Os04g0381700</name>
    <name evidence="5" type="ordered locus">LOC_Os04g31290</name>
    <name evidence="7" type="ORF">OSJNBa0072D21.7</name>
</gene>
<feature type="chain" id="PRO_0000448625" description="Transcription factor BHLH156">
    <location>
        <begin position="1"/>
        <end position="352"/>
    </location>
</feature>
<feature type="domain" description="bHLH" evidence="1">
    <location>
        <begin position="130"/>
        <end position="179"/>
    </location>
</feature>
<feature type="region of interest" description="Disordered" evidence="2">
    <location>
        <begin position="59"/>
        <end position="141"/>
    </location>
</feature>
<feature type="region of interest" description="Basic motif" evidence="1">
    <location>
        <begin position="130"/>
        <end position="143"/>
    </location>
</feature>
<feature type="region of interest" description="Helix-loop-helix motif" evidence="1">
    <location>
        <begin position="144"/>
        <end position="179"/>
    </location>
</feature>
<feature type="region of interest" description="Disordered" evidence="2">
    <location>
        <begin position="194"/>
        <end position="216"/>
    </location>
</feature>
<feature type="compositionally biased region" description="Low complexity" evidence="2">
    <location>
        <begin position="206"/>
        <end position="216"/>
    </location>
</feature>
<organism>
    <name type="scientific">Oryza sativa subsp. japonica</name>
    <name type="common">Rice</name>
    <dbReference type="NCBI Taxonomy" id="39947"/>
    <lineage>
        <taxon>Eukaryota</taxon>
        <taxon>Viridiplantae</taxon>
        <taxon>Streptophyta</taxon>
        <taxon>Embryophyta</taxon>
        <taxon>Tracheophyta</taxon>
        <taxon>Spermatophyta</taxon>
        <taxon>Magnoliopsida</taxon>
        <taxon>Liliopsida</taxon>
        <taxon>Poales</taxon>
        <taxon>Poaceae</taxon>
        <taxon>BOP clade</taxon>
        <taxon>Oryzoideae</taxon>
        <taxon>Oryzeae</taxon>
        <taxon>Oryzinae</taxon>
        <taxon>Oryza</taxon>
        <taxon>Oryza sativa</taxon>
    </lineage>
</organism>
<keyword id="KW-0238">DNA-binding</keyword>
<keyword id="KW-0539">Nucleus</keyword>
<keyword id="KW-1185">Reference proteome</keyword>
<keyword id="KW-0346">Stress response</keyword>
<keyword id="KW-0804">Transcription</keyword>
<keyword id="KW-0805">Transcription regulation</keyword>
<dbReference type="EMBL" id="AL662977">
    <property type="protein sequence ID" value="CAD40741.2"/>
    <property type="status" value="ALT_SEQ"/>
    <property type="molecule type" value="Genomic_DNA"/>
</dbReference>
<dbReference type="EMBL" id="AP014960">
    <property type="protein sequence ID" value="BAS88897.1"/>
    <property type="molecule type" value="Genomic_DNA"/>
</dbReference>
<dbReference type="SMR" id="A0A0N7KIY3"/>
<dbReference type="FunCoup" id="A0A0N7KIY3">
    <property type="interactions" value="1184"/>
</dbReference>
<dbReference type="STRING" id="39947.A0A0N7KIY3"/>
<dbReference type="PaxDb" id="39947-A0A0N7KIY3"/>
<dbReference type="EnsemblPlants" id="Os04t0381700-01">
    <property type="protein sequence ID" value="Os04t0381700-01"/>
    <property type="gene ID" value="Os04g0381700"/>
</dbReference>
<dbReference type="GeneID" id="107276663"/>
<dbReference type="Gramene" id="Os04t0381700-01">
    <property type="protein sequence ID" value="Os04t0381700-01"/>
    <property type="gene ID" value="Os04g0381700"/>
</dbReference>
<dbReference type="KEGG" id="osa:107276663"/>
<dbReference type="eggNOG" id="ENOG502QSJP">
    <property type="taxonomic scope" value="Eukaryota"/>
</dbReference>
<dbReference type="InParanoid" id="A0A0N7KIY3"/>
<dbReference type="OMA" id="DRMQEWQ"/>
<dbReference type="OrthoDB" id="1886792at2759"/>
<dbReference type="Proteomes" id="UP000000763">
    <property type="component" value="Chromosome 4"/>
</dbReference>
<dbReference type="Proteomes" id="UP000059680">
    <property type="component" value="Chromosome 4"/>
</dbReference>
<dbReference type="GO" id="GO:0005634">
    <property type="term" value="C:nucleus"/>
    <property type="evidence" value="ECO:0000318"/>
    <property type="project" value="GO_Central"/>
</dbReference>
<dbReference type="GO" id="GO:0003700">
    <property type="term" value="F:DNA-binding transcription factor activity"/>
    <property type="evidence" value="ECO:0000318"/>
    <property type="project" value="GO_Central"/>
</dbReference>
<dbReference type="GO" id="GO:0046983">
    <property type="term" value="F:protein dimerization activity"/>
    <property type="evidence" value="ECO:0007669"/>
    <property type="project" value="InterPro"/>
</dbReference>
<dbReference type="GO" id="GO:0043565">
    <property type="term" value="F:sequence-specific DNA binding"/>
    <property type="evidence" value="ECO:0000318"/>
    <property type="project" value="GO_Central"/>
</dbReference>
<dbReference type="GO" id="GO:0006355">
    <property type="term" value="P:regulation of DNA-templated transcription"/>
    <property type="evidence" value="ECO:0000318"/>
    <property type="project" value="GO_Central"/>
</dbReference>
<dbReference type="Gene3D" id="4.10.280.10">
    <property type="entry name" value="Helix-loop-helix DNA-binding domain"/>
    <property type="match status" value="1"/>
</dbReference>
<dbReference type="InterPro" id="IPR011598">
    <property type="entry name" value="bHLH_dom"/>
</dbReference>
<dbReference type="InterPro" id="IPR036638">
    <property type="entry name" value="HLH_DNA-bd_sf"/>
</dbReference>
<dbReference type="InterPro" id="IPR051358">
    <property type="entry name" value="TF_AMS/ICE1/BHLH6-like"/>
</dbReference>
<dbReference type="PANTHER" id="PTHR31945:SF17">
    <property type="entry name" value="TRANSCRIPTION FACTOR FER-LIKE IRON DEFICIENCY-INDUCED TRANSCRIPTION FACTOR"/>
    <property type="match status" value="1"/>
</dbReference>
<dbReference type="PANTHER" id="PTHR31945">
    <property type="entry name" value="TRANSCRIPTION FACTOR SCREAM2-RELATED"/>
    <property type="match status" value="1"/>
</dbReference>
<dbReference type="Pfam" id="PF00010">
    <property type="entry name" value="HLH"/>
    <property type="match status" value="1"/>
</dbReference>
<dbReference type="SMART" id="SM00353">
    <property type="entry name" value="HLH"/>
    <property type="match status" value="1"/>
</dbReference>
<dbReference type="SUPFAM" id="SSF47459">
    <property type="entry name" value="HLH, helix-loop-helix DNA-binding domain"/>
    <property type="match status" value="1"/>
</dbReference>
<dbReference type="PROSITE" id="PS50888">
    <property type="entry name" value="BHLH"/>
    <property type="match status" value="1"/>
</dbReference>
<accession>A0A0N7KIY3</accession>
<accession>Q7XVB7</accession>
<name>BH156_ORYSJ</name>
<comment type="function">
    <text evidence="3">Transcription factor involved in positive regulation of genes involved in strategy II iron acquisition, including genes for mugineic acid (MA) family phytosiderophores biosynthesis, and genes involved in S-adenosylmethionine cycle and iron transport (PubMed:31574173). May play a role in the regulation of iron deficiency response by promoting the nuclear localization of IRO2 (PubMed:31574173). Possesses transactivation activity in yeast (PubMed:31574173).</text>
</comment>
<comment type="subunit">
    <text evidence="3">Forms homodimers (PubMed:31574173). Interacts with IRO2 in the nucleus (PubMed:31574173).</text>
</comment>
<comment type="subcellular location">
    <subcellularLocation>
        <location evidence="1 3">Nucleus</location>
    </subcellularLocation>
</comment>
<comment type="tissue specificity">
    <text evidence="3">Expressed in the meristematic zone of lateral and primary roots.</text>
</comment>
<comment type="induction">
    <text evidence="3">Strongly induced by iron deficiency in roots, but not in shoots.</text>
</comment>
<comment type="disruption phenotype">
    <text evidence="3">No visible phenotype under normal growth conditions, but mutant plants exhibit impaired growth, leaf chlorosis and reduced iron concentration in shoots, when grown under iron deficiency conditions.</text>
</comment>
<comment type="similarity">
    <text evidence="5">Belongs to the bHLH protein family.</text>
</comment>
<comment type="sequence caution" evidence="5">
    <conflict type="erroneous gene model prediction">
        <sequence resource="EMBL-CDS" id="CAD40741"/>
    </conflict>
</comment>
<proteinExistence type="evidence at protein level"/>
<sequence>MEHHHLLLQLSPPPPPPPLPAAHLMMSPSFFDAGVFADVGGDWMEDLMHLGELFGVGVGGDDDDNGGVDGGVGGGDDRMQEWQNNCEGAGSPDHQPSCGDGDGDGDGDVSPRDGELGDGDGDNSATRKRRDRSKTIVSERKRRVRMKEKLYELRALVPNITKMDKASIIADAVVYVKDLQAHARKLKEEVAALEEARPIRPPPPSAAAQRPQRQPRRVAAAAAQLARAADAAAVTTAAAAPHGARVAHVGAAQVGEGRFFVTVECEPAAAAARGGGGGVAAPVCAAVESLSCFTVESSTVGCSPDRVVATLTLKVSEAEEDVSAISECTVKLWVMAALLKEGFRPQPTVQIS</sequence>
<protein>
    <recommendedName>
        <fullName evidence="5">Transcription factor BHLH156</fullName>
    </recommendedName>
    <alternativeName>
        <fullName evidence="4">Basic helix-loop-helix protein 156</fullName>
        <shortName evidence="4">OsbHLH156</shortName>
    </alternativeName>
    <alternativeName>
        <fullName evidence="5">bHLH transcription factor bHLH156</fullName>
    </alternativeName>
</protein>
<evidence type="ECO:0000255" key="1">
    <source>
        <dbReference type="PROSITE-ProRule" id="PRU00981"/>
    </source>
</evidence>
<evidence type="ECO:0000256" key="2">
    <source>
        <dbReference type="SAM" id="MobiDB-lite"/>
    </source>
</evidence>
<evidence type="ECO:0000269" key="3">
    <source>
    </source>
</evidence>
<evidence type="ECO:0000303" key="4">
    <source>
    </source>
</evidence>
<evidence type="ECO:0000305" key="5"/>
<evidence type="ECO:0000312" key="6">
    <source>
        <dbReference type="EMBL" id="BAS88897.1"/>
    </source>
</evidence>
<evidence type="ECO:0000312" key="7">
    <source>
        <dbReference type="EMBL" id="CAD40741.2"/>
    </source>
</evidence>
<reference key="1">
    <citation type="journal article" date="2002" name="Nature">
        <title>Sequence and analysis of rice chromosome 4.</title>
        <authorList>
            <person name="Feng Q."/>
            <person name="Zhang Y."/>
            <person name="Hao P."/>
            <person name="Wang S."/>
            <person name="Fu G."/>
            <person name="Huang Y."/>
            <person name="Li Y."/>
            <person name="Zhu J."/>
            <person name="Liu Y."/>
            <person name="Hu X."/>
            <person name="Jia P."/>
            <person name="Zhang Y."/>
            <person name="Zhao Q."/>
            <person name="Ying K."/>
            <person name="Yu S."/>
            <person name="Tang Y."/>
            <person name="Weng Q."/>
            <person name="Zhang L."/>
            <person name="Lu Y."/>
            <person name="Mu J."/>
            <person name="Lu Y."/>
            <person name="Zhang L.S."/>
            <person name="Yu Z."/>
            <person name="Fan D."/>
            <person name="Liu X."/>
            <person name="Lu T."/>
            <person name="Li C."/>
            <person name="Wu Y."/>
            <person name="Sun T."/>
            <person name="Lei H."/>
            <person name="Li T."/>
            <person name="Hu H."/>
            <person name="Guan J."/>
            <person name="Wu M."/>
            <person name="Zhang R."/>
            <person name="Zhou B."/>
            <person name="Chen Z."/>
            <person name="Chen L."/>
            <person name="Jin Z."/>
            <person name="Wang R."/>
            <person name="Yin H."/>
            <person name="Cai Z."/>
            <person name="Ren S."/>
            <person name="Lv G."/>
            <person name="Gu W."/>
            <person name="Zhu G."/>
            <person name="Tu Y."/>
            <person name="Jia J."/>
            <person name="Zhang Y."/>
            <person name="Chen J."/>
            <person name="Kang H."/>
            <person name="Chen X."/>
            <person name="Shao C."/>
            <person name="Sun Y."/>
            <person name="Hu Q."/>
            <person name="Zhang X."/>
            <person name="Zhang W."/>
            <person name="Wang L."/>
            <person name="Ding C."/>
            <person name="Sheng H."/>
            <person name="Gu J."/>
            <person name="Chen S."/>
            <person name="Ni L."/>
            <person name="Zhu F."/>
            <person name="Chen W."/>
            <person name="Lan L."/>
            <person name="Lai Y."/>
            <person name="Cheng Z."/>
            <person name="Gu M."/>
            <person name="Jiang J."/>
            <person name="Li J."/>
            <person name="Hong G."/>
            <person name="Xue Y."/>
            <person name="Han B."/>
        </authorList>
    </citation>
    <scope>NUCLEOTIDE SEQUENCE [LARGE SCALE GENOMIC DNA]</scope>
    <source>
        <strain>cv. Nipponbare</strain>
    </source>
</reference>
<reference key="2">
    <citation type="journal article" date="2005" name="Nature">
        <title>The map-based sequence of the rice genome.</title>
        <authorList>
            <consortium name="International rice genome sequencing project (IRGSP)"/>
        </authorList>
    </citation>
    <scope>NUCLEOTIDE SEQUENCE [LARGE SCALE GENOMIC DNA]</scope>
    <source>
        <strain>cv. Nipponbare</strain>
    </source>
</reference>
<reference key="3">
    <citation type="journal article" date="2013" name="Rice">
        <title>Improvement of the Oryza sativa Nipponbare reference genome using next generation sequence and optical map data.</title>
        <authorList>
            <person name="Kawahara Y."/>
            <person name="de la Bastide M."/>
            <person name="Hamilton J.P."/>
            <person name="Kanamori H."/>
            <person name="McCombie W.R."/>
            <person name="Ouyang S."/>
            <person name="Schwartz D.C."/>
            <person name="Tanaka T."/>
            <person name="Wu J."/>
            <person name="Zhou S."/>
            <person name="Childs K.L."/>
            <person name="Davidson R.M."/>
            <person name="Lin H."/>
            <person name="Quesada-Ocampo L."/>
            <person name="Vaillancourt B."/>
            <person name="Sakai H."/>
            <person name="Lee S.S."/>
            <person name="Kim J."/>
            <person name="Numa H."/>
            <person name="Itoh T."/>
            <person name="Buell C.R."/>
            <person name="Matsumoto T."/>
        </authorList>
    </citation>
    <scope>GENOME REANNOTATION</scope>
    <source>
        <strain>cv. Nipponbare</strain>
    </source>
</reference>
<reference key="4">
    <citation type="journal article" date="2006" name="Plant Physiol.">
        <title>Genome-wide analysis of basic/helix-loop-helix transcription factor family in rice and Arabidopsis.</title>
        <authorList>
            <person name="Li X."/>
            <person name="Duan X."/>
            <person name="Jiang H."/>
            <person name="Sun Y."/>
            <person name="Tang Y."/>
            <person name="Yuan Z."/>
            <person name="Guo J."/>
            <person name="Liang W."/>
            <person name="Chen L."/>
            <person name="Yin J."/>
            <person name="Ma H."/>
            <person name="Wang J."/>
            <person name="Zhang D."/>
        </authorList>
    </citation>
    <scope>GENE FAMILY</scope>
    <scope>NOMENCLATURE</scope>
</reference>
<reference key="5">
    <citation type="journal article" date="2020" name="New Phytol.">
        <title>A transcription factor OsbHLH156 regulates Strategy II iron acquisition through localizing IRO2 to the nucleus in rice.</title>
        <authorList>
            <person name="Wang S."/>
            <person name="Li L."/>
            <person name="Ying Y."/>
            <person name="Wang J."/>
            <person name="Shao J.F."/>
            <person name="Yamaji N."/>
            <person name="Whelan J."/>
            <person name="Ma J.F."/>
            <person name="Shou H."/>
        </authorList>
    </citation>
    <scope>FUNCTION</scope>
    <scope>HOMODIMERIZATION</scope>
    <scope>INTERACTION WITH IRO2</scope>
    <scope>SUBCELLULAR LOCATION</scope>
    <scope>TISSUE SPECIFICITY</scope>
    <scope>INDUCTION BY IRON DEFICIENCY</scope>
    <scope>DISRUPTION PHENOTYPE</scope>
</reference>